<name>TRUB_BACAN</name>
<reference key="1">
    <citation type="journal article" date="2003" name="Nature">
        <title>The genome sequence of Bacillus anthracis Ames and comparison to closely related bacteria.</title>
        <authorList>
            <person name="Read T.D."/>
            <person name="Peterson S.N."/>
            <person name="Tourasse N.J."/>
            <person name="Baillie L.W."/>
            <person name="Paulsen I.T."/>
            <person name="Nelson K.E."/>
            <person name="Tettelin H."/>
            <person name="Fouts D.E."/>
            <person name="Eisen J.A."/>
            <person name="Gill S.R."/>
            <person name="Holtzapple E.K."/>
            <person name="Okstad O.A."/>
            <person name="Helgason E."/>
            <person name="Rilstone J."/>
            <person name="Wu M."/>
            <person name="Kolonay J.F."/>
            <person name="Beanan M.J."/>
            <person name="Dodson R.J."/>
            <person name="Brinkac L.M."/>
            <person name="Gwinn M.L."/>
            <person name="DeBoy R.T."/>
            <person name="Madpu R."/>
            <person name="Daugherty S.C."/>
            <person name="Durkin A.S."/>
            <person name="Haft D.H."/>
            <person name="Nelson W.C."/>
            <person name="Peterson J.D."/>
            <person name="Pop M."/>
            <person name="Khouri H.M."/>
            <person name="Radune D."/>
            <person name="Benton J.L."/>
            <person name="Mahamoud Y."/>
            <person name="Jiang L."/>
            <person name="Hance I.R."/>
            <person name="Weidman J.F."/>
            <person name="Berry K.J."/>
            <person name="Plaut R.D."/>
            <person name="Wolf A.M."/>
            <person name="Watkins K.L."/>
            <person name="Nierman W.C."/>
            <person name="Hazen A."/>
            <person name="Cline R.T."/>
            <person name="Redmond C."/>
            <person name="Thwaite J.E."/>
            <person name="White O."/>
            <person name="Salzberg S.L."/>
            <person name="Thomason B."/>
            <person name="Friedlander A.M."/>
            <person name="Koehler T.M."/>
            <person name="Hanna P.C."/>
            <person name="Kolstoe A.-B."/>
            <person name="Fraser C.M."/>
        </authorList>
    </citation>
    <scope>NUCLEOTIDE SEQUENCE [LARGE SCALE GENOMIC DNA]</scope>
    <source>
        <strain>Ames / isolate Porton</strain>
    </source>
</reference>
<reference key="2">
    <citation type="journal article" date="2009" name="J. Bacteriol.">
        <title>The complete genome sequence of Bacillus anthracis Ames 'Ancestor'.</title>
        <authorList>
            <person name="Ravel J."/>
            <person name="Jiang L."/>
            <person name="Stanley S.T."/>
            <person name="Wilson M.R."/>
            <person name="Decker R.S."/>
            <person name="Read T.D."/>
            <person name="Worsham P."/>
            <person name="Keim P.S."/>
            <person name="Salzberg S.L."/>
            <person name="Fraser-Liggett C.M."/>
            <person name="Rasko D.A."/>
        </authorList>
    </citation>
    <scope>NUCLEOTIDE SEQUENCE [LARGE SCALE GENOMIC DNA]</scope>
    <source>
        <strain>Ames ancestor</strain>
    </source>
</reference>
<reference key="3">
    <citation type="submission" date="2004-01" db="EMBL/GenBank/DDBJ databases">
        <title>Complete genome sequence of Bacillus anthracis Sterne.</title>
        <authorList>
            <person name="Brettin T.S."/>
            <person name="Bruce D."/>
            <person name="Challacombe J.F."/>
            <person name="Gilna P."/>
            <person name="Han C."/>
            <person name="Hill K."/>
            <person name="Hitchcock P."/>
            <person name="Jackson P."/>
            <person name="Keim P."/>
            <person name="Longmire J."/>
            <person name="Lucas S."/>
            <person name="Okinaka R."/>
            <person name="Richardson P."/>
            <person name="Rubin E."/>
            <person name="Tice H."/>
        </authorList>
    </citation>
    <scope>NUCLEOTIDE SEQUENCE [LARGE SCALE GENOMIC DNA]</scope>
    <source>
        <strain>Sterne</strain>
    </source>
</reference>
<feature type="chain" id="PRO_0000121783" description="tRNA pseudouridine synthase B">
    <location>
        <begin position="1"/>
        <end position="307"/>
    </location>
</feature>
<feature type="active site" description="Nucleophile" evidence="1">
    <location>
        <position position="38"/>
    </location>
</feature>
<evidence type="ECO:0000255" key="1">
    <source>
        <dbReference type="HAMAP-Rule" id="MF_01080"/>
    </source>
</evidence>
<organism>
    <name type="scientific">Bacillus anthracis</name>
    <dbReference type="NCBI Taxonomy" id="1392"/>
    <lineage>
        <taxon>Bacteria</taxon>
        <taxon>Bacillati</taxon>
        <taxon>Bacillota</taxon>
        <taxon>Bacilli</taxon>
        <taxon>Bacillales</taxon>
        <taxon>Bacillaceae</taxon>
        <taxon>Bacillus</taxon>
        <taxon>Bacillus cereus group</taxon>
    </lineage>
</organism>
<sequence length="307" mass="34643">MEGVVLLHKPKGMTSHDCVFKLRKILREKRIGHTGTLDPDVTGVLPICVGRATKIAQFLTSETKTYEGEVTLGFSTTTEDASGEVVETKYVDRVITRKEVEEALATLTGTIEQMPPMFSAVKVNGKKLYEYARAGQEVERPVRTITIHEFVLLDDREVFEGENISFRFRVTCSKGTYVRTLAVMIGEKLGFPSHMSHLVRTASGEFLLEDCISFEEIEENVQNGTVESIFISIDEALSKFPKMVVDEKQAEKIKNGMFLKNELQITAPFITVFDKNDRCLAIYEHHPKHPGMLKPMKVLVNNQELKL</sequence>
<gene>
    <name evidence="1" type="primary">truB</name>
    <name type="ordered locus">BA_3947</name>
    <name type="ordered locus">GBAA_3947</name>
    <name type="ordered locus">BAS3661</name>
</gene>
<protein>
    <recommendedName>
        <fullName evidence="1">tRNA pseudouridine synthase B</fullName>
        <ecNumber evidence="1">5.4.99.25</ecNumber>
    </recommendedName>
    <alternativeName>
        <fullName evidence="1">tRNA pseudouridine(55) synthase</fullName>
        <shortName evidence="1">Psi55 synthase</shortName>
    </alternativeName>
    <alternativeName>
        <fullName evidence="1">tRNA pseudouridylate synthase</fullName>
    </alternativeName>
    <alternativeName>
        <fullName evidence="1">tRNA-uridine isomerase</fullName>
    </alternativeName>
</protein>
<proteinExistence type="inferred from homology"/>
<accession>P59873</accession>
<accession>Q6HUS6</accession>
<dbReference type="EC" id="5.4.99.25" evidence="1"/>
<dbReference type="EMBL" id="AE016879">
    <property type="status" value="NOT_ANNOTATED_CDS"/>
    <property type="molecule type" value="Genomic_DNA"/>
</dbReference>
<dbReference type="EMBL" id="AE017334">
    <property type="status" value="NOT_ANNOTATED_CDS"/>
    <property type="molecule type" value="Genomic_DNA"/>
</dbReference>
<dbReference type="EMBL" id="AE017225">
    <property type="protein sequence ID" value="AAT55963.1"/>
    <property type="molecule type" value="Genomic_DNA"/>
</dbReference>
<dbReference type="RefSeq" id="WP_000399357.1">
    <property type="nucleotide sequence ID" value="NZ_WXXJ01000026.1"/>
</dbReference>
<dbReference type="RefSeq" id="YP_029912.1">
    <property type="nucleotide sequence ID" value="NC_005945.1"/>
</dbReference>
<dbReference type="SMR" id="P59873"/>
<dbReference type="STRING" id="261594.GBAA_3947"/>
<dbReference type="GeneID" id="45023638"/>
<dbReference type="KEGG" id="bat:BAS3661"/>
<dbReference type="PATRIC" id="fig|260799.14.peg.3917"/>
<dbReference type="eggNOG" id="COG0130">
    <property type="taxonomic scope" value="Bacteria"/>
</dbReference>
<dbReference type="OMA" id="VDKPSGF"/>
<dbReference type="OrthoDB" id="9802309at2"/>
<dbReference type="Proteomes" id="UP000000427">
    <property type="component" value="Chromosome"/>
</dbReference>
<dbReference type="Proteomes" id="UP000000594">
    <property type="component" value="Chromosome"/>
</dbReference>
<dbReference type="GO" id="GO:0003723">
    <property type="term" value="F:RNA binding"/>
    <property type="evidence" value="ECO:0007669"/>
    <property type="project" value="InterPro"/>
</dbReference>
<dbReference type="GO" id="GO:0160148">
    <property type="term" value="F:tRNA pseudouridine(55) synthase activity"/>
    <property type="evidence" value="ECO:0007669"/>
    <property type="project" value="UniProtKB-EC"/>
</dbReference>
<dbReference type="GO" id="GO:1990481">
    <property type="term" value="P:mRNA pseudouridine synthesis"/>
    <property type="evidence" value="ECO:0007669"/>
    <property type="project" value="TreeGrafter"/>
</dbReference>
<dbReference type="GO" id="GO:0031119">
    <property type="term" value="P:tRNA pseudouridine synthesis"/>
    <property type="evidence" value="ECO:0007669"/>
    <property type="project" value="UniProtKB-UniRule"/>
</dbReference>
<dbReference type="CDD" id="cd02573">
    <property type="entry name" value="PseudoU_synth_EcTruB"/>
    <property type="match status" value="1"/>
</dbReference>
<dbReference type="FunFam" id="3.30.2350.10:FF:000011">
    <property type="entry name" value="tRNA pseudouridine synthase B"/>
    <property type="match status" value="1"/>
</dbReference>
<dbReference type="Gene3D" id="3.30.2350.10">
    <property type="entry name" value="Pseudouridine synthase"/>
    <property type="match status" value="1"/>
</dbReference>
<dbReference type="HAMAP" id="MF_01080">
    <property type="entry name" value="TruB_bact"/>
    <property type="match status" value="1"/>
</dbReference>
<dbReference type="InterPro" id="IPR020103">
    <property type="entry name" value="PsdUridine_synth_cat_dom_sf"/>
</dbReference>
<dbReference type="InterPro" id="IPR002501">
    <property type="entry name" value="PsdUridine_synth_N"/>
</dbReference>
<dbReference type="InterPro" id="IPR014780">
    <property type="entry name" value="tRNA_psdUridine_synth_TruB"/>
</dbReference>
<dbReference type="InterPro" id="IPR032819">
    <property type="entry name" value="TruB_C"/>
</dbReference>
<dbReference type="NCBIfam" id="TIGR00431">
    <property type="entry name" value="TruB"/>
    <property type="match status" value="1"/>
</dbReference>
<dbReference type="PANTHER" id="PTHR13767:SF2">
    <property type="entry name" value="PSEUDOURIDYLATE SYNTHASE TRUB1"/>
    <property type="match status" value="1"/>
</dbReference>
<dbReference type="PANTHER" id="PTHR13767">
    <property type="entry name" value="TRNA-PSEUDOURIDINE SYNTHASE"/>
    <property type="match status" value="1"/>
</dbReference>
<dbReference type="Pfam" id="PF16198">
    <property type="entry name" value="TruB_C_2"/>
    <property type="match status" value="1"/>
</dbReference>
<dbReference type="Pfam" id="PF01509">
    <property type="entry name" value="TruB_N"/>
    <property type="match status" value="1"/>
</dbReference>
<dbReference type="SUPFAM" id="SSF55120">
    <property type="entry name" value="Pseudouridine synthase"/>
    <property type="match status" value="1"/>
</dbReference>
<keyword id="KW-0413">Isomerase</keyword>
<keyword id="KW-1185">Reference proteome</keyword>
<keyword id="KW-0819">tRNA processing</keyword>
<comment type="function">
    <text evidence="1">Responsible for synthesis of pseudouridine from uracil-55 in the psi GC loop of transfer RNAs.</text>
</comment>
<comment type="catalytic activity">
    <reaction evidence="1">
        <text>uridine(55) in tRNA = pseudouridine(55) in tRNA</text>
        <dbReference type="Rhea" id="RHEA:42532"/>
        <dbReference type="Rhea" id="RHEA-COMP:10101"/>
        <dbReference type="Rhea" id="RHEA-COMP:10102"/>
        <dbReference type="ChEBI" id="CHEBI:65314"/>
        <dbReference type="ChEBI" id="CHEBI:65315"/>
        <dbReference type="EC" id="5.4.99.25"/>
    </reaction>
</comment>
<comment type="similarity">
    <text evidence="1">Belongs to the pseudouridine synthase TruB family. Type 1 subfamily.</text>
</comment>